<dbReference type="EC" id="1.14.11.-" evidence="1"/>
<dbReference type="EMBL" id="CP000970">
    <property type="protein sequence ID" value="ACB17209.1"/>
    <property type="molecule type" value="Genomic_DNA"/>
</dbReference>
<dbReference type="RefSeq" id="WP_000990171.1">
    <property type="nucleotide sequence ID" value="NC_010498.1"/>
</dbReference>
<dbReference type="SMR" id="B1LM96"/>
<dbReference type="KEGG" id="ecm:EcSMS35_0828"/>
<dbReference type="HOGENOM" id="CLU_106663_0_0_6"/>
<dbReference type="Proteomes" id="UP000007011">
    <property type="component" value="Chromosome"/>
</dbReference>
<dbReference type="GO" id="GO:0016706">
    <property type="term" value="F:2-oxoglutarate-dependent dioxygenase activity"/>
    <property type="evidence" value="ECO:0007669"/>
    <property type="project" value="UniProtKB-UniRule"/>
</dbReference>
<dbReference type="GO" id="GO:0005506">
    <property type="term" value="F:iron ion binding"/>
    <property type="evidence" value="ECO:0007669"/>
    <property type="project" value="UniProtKB-UniRule"/>
</dbReference>
<dbReference type="GO" id="GO:0031418">
    <property type="term" value="F:L-ascorbic acid binding"/>
    <property type="evidence" value="ECO:0007669"/>
    <property type="project" value="UniProtKB-KW"/>
</dbReference>
<dbReference type="GO" id="GO:0006974">
    <property type="term" value="P:DNA damage response"/>
    <property type="evidence" value="ECO:0007669"/>
    <property type="project" value="TreeGrafter"/>
</dbReference>
<dbReference type="GO" id="GO:0006879">
    <property type="term" value="P:intracellular iron ion homeostasis"/>
    <property type="evidence" value="ECO:0007669"/>
    <property type="project" value="TreeGrafter"/>
</dbReference>
<dbReference type="FunFam" id="2.60.120.620:FF:000006">
    <property type="entry name" value="PKHD-type hydroxylase YbiX"/>
    <property type="match status" value="1"/>
</dbReference>
<dbReference type="FunFam" id="4.10.860.20:FF:000001">
    <property type="entry name" value="PKHD-type hydroxylase YbiX"/>
    <property type="match status" value="1"/>
</dbReference>
<dbReference type="Gene3D" id="2.60.120.620">
    <property type="entry name" value="q2cbj1_9rhob like domain"/>
    <property type="match status" value="1"/>
</dbReference>
<dbReference type="Gene3D" id="4.10.860.20">
    <property type="entry name" value="Rabenosyn, Rab binding domain"/>
    <property type="match status" value="1"/>
</dbReference>
<dbReference type="HAMAP" id="MF_00657">
    <property type="entry name" value="Hydroxyl_YbiX"/>
    <property type="match status" value="1"/>
</dbReference>
<dbReference type="InterPro" id="IPR005123">
    <property type="entry name" value="Oxoglu/Fe-dep_dioxygenase_dom"/>
</dbReference>
<dbReference type="InterPro" id="IPR041097">
    <property type="entry name" value="PKHD_C"/>
</dbReference>
<dbReference type="InterPro" id="IPR023550">
    <property type="entry name" value="PKHD_hydroxylase"/>
</dbReference>
<dbReference type="InterPro" id="IPR006620">
    <property type="entry name" value="Pro_4_hyd_alph"/>
</dbReference>
<dbReference type="InterPro" id="IPR044862">
    <property type="entry name" value="Pro_4_hyd_alph_FE2OG_OXY"/>
</dbReference>
<dbReference type="NCBIfam" id="NF003972">
    <property type="entry name" value="PRK05467.1-1"/>
    <property type="match status" value="1"/>
</dbReference>
<dbReference type="NCBIfam" id="NF003974">
    <property type="entry name" value="PRK05467.1-3"/>
    <property type="match status" value="1"/>
</dbReference>
<dbReference type="NCBIfam" id="NF003975">
    <property type="entry name" value="PRK05467.1-4"/>
    <property type="match status" value="1"/>
</dbReference>
<dbReference type="PANTHER" id="PTHR41536">
    <property type="entry name" value="PKHD-TYPE HYDROXYLASE YBIX"/>
    <property type="match status" value="1"/>
</dbReference>
<dbReference type="PANTHER" id="PTHR41536:SF1">
    <property type="entry name" value="PKHD-TYPE HYDROXYLASE YBIX"/>
    <property type="match status" value="1"/>
</dbReference>
<dbReference type="Pfam" id="PF13640">
    <property type="entry name" value="2OG-FeII_Oxy_3"/>
    <property type="match status" value="1"/>
</dbReference>
<dbReference type="Pfam" id="PF18331">
    <property type="entry name" value="PKHD_C"/>
    <property type="match status" value="1"/>
</dbReference>
<dbReference type="SMART" id="SM00702">
    <property type="entry name" value="P4Hc"/>
    <property type="match status" value="1"/>
</dbReference>
<dbReference type="SUPFAM" id="SSF51197">
    <property type="entry name" value="Clavaminate synthase-like"/>
    <property type="match status" value="1"/>
</dbReference>
<dbReference type="PROSITE" id="PS51471">
    <property type="entry name" value="FE2OG_OXY"/>
    <property type="match status" value="1"/>
</dbReference>
<accession>B1LM96</accession>
<feature type="chain" id="PRO_0000346480" description="PKHD-type hydroxylase YbiX">
    <location>
        <begin position="1"/>
        <end position="225"/>
    </location>
</feature>
<feature type="domain" description="Fe2OG dioxygenase" evidence="1">
    <location>
        <begin position="78"/>
        <end position="177"/>
    </location>
</feature>
<feature type="binding site" evidence="1">
    <location>
        <position position="96"/>
    </location>
    <ligand>
        <name>Fe cation</name>
        <dbReference type="ChEBI" id="CHEBI:24875"/>
    </ligand>
</feature>
<feature type="binding site" evidence="1">
    <location>
        <position position="98"/>
    </location>
    <ligand>
        <name>Fe cation</name>
        <dbReference type="ChEBI" id="CHEBI:24875"/>
    </ligand>
</feature>
<feature type="binding site" evidence="1">
    <location>
        <position position="158"/>
    </location>
    <ligand>
        <name>Fe cation</name>
        <dbReference type="ChEBI" id="CHEBI:24875"/>
    </ligand>
</feature>
<feature type="binding site" evidence="1">
    <location>
        <position position="168"/>
    </location>
    <ligand>
        <name>2-oxoglutarate</name>
        <dbReference type="ChEBI" id="CHEBI:16810"/>
    </ligand>
</feature>
<keyword id="KW-0223">Dioxygenase</keyword>
<keyword id="KW-0408">Iron</keyword>
<keyword id="KW-0479">Metal-binding</keyword>
<keyword id="KW-0560">Oxidoreductase</keyword>
<keyword id="KW-0847">Vitamin C</keyword>
<evidence type="ECO:0000255" key="1">
    <source>
        <dbReference type="HAMAP-Rule" id="MF_00657"/>
    </source>
</evidence>
<name>YBIX_ECOSM</name>
<comment type="cofactor">
    <cofactor evidence="1">
        <name>Fe(2+)</name>
        <dbReference type="ChEBI" id="CHEBI:29033"/>
    </cofactor>
    <text evidence="1">Binds 1 Fe(2+) ion per subunit.</text>
</comment>
<comment type="cofactor">
    <cofactor evidence="1">
        <name>L-ascorbate</name>
        <dbReference type="ChEBI" id="CHEBI:38290"/>
    </cofactor>
</comment>
<gene>
    <name evidence="1" type="primary">ybiX</name>
    <name type="ordered locus">EcSMS35_0828</name>
</gene>
<sequence>MMYHIPGVLSPQDVARFREQLEQAEWVDGRVTTGAQGAQVKNNQQVDTRSTLYAALQNEVLNAVNQHALFFAAALPRTLSTPLFNRYQNNETYGFHVDGAVRSHPQNGWMRTDLSATLFLSDPESYDGGELVVNDTFGQHRVKLPAGDLVLYPSSSLHCVTPVTRGVRVASFMWIQSMIRDDKKRAMLFELDNNIQSLKSHYGESEEILSLLNLYHNLLREWSEI</sequence>
<protein>
    <recommendedName>
        <fullName evidence="1">PKHD-type hydroxylase YbiX</fullName>
        <ecNumber evidence="1">1.14.11.-</ecNumber>
    </recommendedName>
</protein>
<proteinExistence type="inferred from homology"/>
<organism>
    <name type="scientific">Escherichia coli (strain SMS-3-5 / SECEC)</name>
    <dbReference type="NCBI Taxonomy" id="439855"/>
    <lineage>
        <taxon>Bacteria</taxon>
        <taxon>Pseudomonadati</taxon>
        <taxon>Pseudomonadota</taxon>
        <taxon>Gammaproteobacteria</taxon>
        <taxon>Enterobacterales</taxon>
        <taxon>Enterobacteriaceae</taxon>
        <taxon>Escherichia</taxon>
    </lineage>
</organism>
<reference key="1">
    <citation type="journal article" date="2008" name="J. Bacteriol.">
        <title>Insights into the environmental resistance gene pool from the genome sequence of the multidrug-resistant environmental isolate Escherichia coli SMS-3-5.</title>
        <authorList>
            <person name="Fricke W.F."/>
            <person name="Wright M.S."/>
            <person name="Lindell A.H."/>
            <person name="Harkins D.M."/>
            <person name="Baker-Austin C."/>
            <person name="Ravel J."/>
            <person name="Stepanauskas R."/>
        </authorList>
    </citation>
    <scope>NUCLEOTIDE SEQUENCE [LARGE SCALE GENOMIC DNA]</scope>
    <source>
        <strain>SMS-3-5 / SECEC</strain>
    </source>
</reference>